<reference key="1">
    <citation type="journal article" date="2002" name="Nat. Biotechnol.">
        <title>Genome sequence of the dissimilatory metal ion-reducing bacterium Shewanella oneidensis.</title>
        <authorList>
            <person name="Heidelberg J.F."/>
            <person name="Paulsen I.T."/>
            <person name="Nelson K.E."/>
            <person name="Gaidos E.J."/>
            <person name="Nelson W.C."/>
            <person name="Read T.D."/>
            <person name="Eisen J.A."/>
            <person name="Seshadri R."/>
            <person name="Ward N.L."/>
            <person name="Methe B.A."/>
            <person name="Clayton R.A."/>
            <person name="Meyer T."/>
            <person name="Tsapin A."/>
            <person name="Scott J."/>
            <person name="Beanan M.J."/>
            <person name="Brinkac L.M."/>
            <person name="Daugherty S.C."/>
            <person name="DeBoy R.T."/>
            <person name="Dodson R.J."/>
            <person name="Durkin A.S."/>
            <person name="Haft D.H."/>
            <person name="Kolonay J.F."/>
            <person name="Madupu R."/>
            <person name="Peterson J.D."/>
            <person name="Umayam L.A."/>
            <person name="White O."/>
            <person name="Wolf A.M."/>
            <person name="Vamathevan J.J."/>
            <person name="Weidman J.F."/>
            <person name="Impraim M."/>
            <person name="Lee K."/>
            <person name="Berry K.J."/>
            <person name="Lee C."/>
            <person name="Mueller J."/>
            <person name="Khouri H.M."/>
            <person name="Gill J."/>
            <person name="Utterback T.R."/>
            <person name="McDonald L.A."/>
            <person name="Feldblyum T.V."/>
            <person name="Smith H.O."/>
            <person name="Venter J.C."/>
            <person name="Nealson K.H."/>
            <person name="Fraser C.M."/>
        </authorList>
    </citation>
    <scope>NUCLEOTIDE SEQUENCE [LARGE SCALE GENOMIC DNA]</scope>
    <source>
        <strain>ATCC 700550 / JCM 31522 / CIP 106686 / LMG 19005 / NCIMB 14063 / MR-1</strain>
    </source>
</reference>
<dbReference type="EC" id="1.3.1.98" evidence="1"/>
<dbReference type="EMBL" id="AE014299">
    <property type="protein sequence ID" value="AAN53298.1"/>
    <property type="molecule type" value="Genomic_DNA"/>
</dbReference>
<dbReference type="RefSeq" id="NP_715853.1">
    <property type="nucleotide sequence ID" value="NC_004347.2"/>
</dbReference>
<dbReference type="RefSeq" id="WP_011070601.1">
    <property type="nucleotide sequence ID" value="NC_004347.2"/>
</dbReference>
<dbReference type="SMR" id="Q8EK85"/>
<dbReference type="STRING" id="211586.SO_0213"/>
<dbReference type="PaxDb" id="211586-SO_0213"/>
<dbReference type="KEGG" id="son:SO_0213"/>
<dbReference type="PATRIC" id="fig|211586.12.peg.201"/>
<dbReference type="eggNOG" id="COG0812">
    <property type="taxonomic scope" value="Bacteria"/>
</dbReference>
<dbReference type="HOGENOM" id="CLU_035304_0_0_6"/>
<dbReference type="OrthoDB" id="9804753at2"/>
<dbReference type="PhylomeDB" id="Q8EK85"/>
<dbReference type="BioCyc" id="SONE211586:G1GMP-199-MONOMER"/>
<dbReference type="UniPathway" id="UPA00219"/>
<dbReference type="Proteomes" id="UP000008186">
    <property type="component" value="Chromosome"/>
</dbReference>
<dbReference type="GO" id="GO:0005829">
    <property type="term" value="C:cytosol"/>
    <property type="evidence" value="ECO:0000318"/>
    <property type="project" value="GO_Central"/>
</dbReference>
<dbReference type="GO" id="GO:0071949">
    <property type="term" value="F:FAD binding"/>
    <property type="evidence" value="ECO:0007669"/>
    <property type="project" value="InterPro"/>
</dbReference>
<dbReference type="GO" id="GO:0050660">
    <property type="term" value="F:flavin adenine dinucleotide binding"/>
    <property type="evidence" value="ECO:0000318"/>
    <property type="project" value="GO_Central"/>
</dbReference>
<dbReference type="GO" id="GO:0008762">
    <property type="term" value="F:UDP-N-acetylmuramate dehydrogenase activity"/>
    <property type="evidence" value="ECO:0000318"/>
    <property type="project" value="GO_Central"/>
</dbReference>
<dbReference type="GO" id="GO:0051301">
    <property type="term" value="P:cell division"/>
    <property type="evidence" value="ECO:0007669"/>
    <property type="project" value="UniProtKB-KW"/>
</dbReference>
<dbReference type="GO" id="GO:0071555">
    <property type="term" value="P:cell wall organization"/>
    <property type="evidence" value="ECO:0000318"/>
    <property type="project" value="GO_Central"/>
</dbReference>
<dbReference type="GO" id="GO:0009252">
    <property type="term" value="P:peptidoglycan biosynthetic process"/>
    <property type="evidence" value="ECO:0007669"/>
    <property type="project" value="UniProtKB-UniRule"/>
</dbReference>
<dbReference type="GO" id="GO:0008360">
    <property type="term" value="P:regulation of cell shape"/>
    <property type="evidence" value="ECO:0007669"/>
    <property type="project" value="UniProtKB-KW"/>
</dbReference>
<dbReference type="Gene3D" id="3.30.465.10">
    <property type="match status" value="1"/>
</dbReference>
<dbReference type="Gene3D" id="3.90.78.10">
    <property type="entry name" value="UDP-N-acetylenolpyruvoylglucosamine reductase, C-terminal domain"/>
    <property type="match status" value="1"/>
</dbReference>
<dbReference type="Gene3D" id="3.30.43.10">
    <property type="entry name" value="Uridine Diphospho-n-acetylenolpyruvylglucosamine Reductase, domain 2"/>
    <property type="match status" value="1"/>
</dbReference>
<dbReference type="HAMAP" id="MF_00037">
    <property type="entry name" value="MurB"/>
    <property type="match status" value="1"/>
</dbReference>
<dbReference type="InterPro" id="IPR016166">
    <property type="entry name" value="FAD-bd_PCMH"/>
</dbReference>
<dbReference type="InterPro" id="IPR036318">
    <property type="entry name" value="FAD-bd_PCMH-like_sf"/>
</dbReference>
<dbReference type="InterPro" id="IPR016167">
    <property type="entry name" value="FAD-bd_PCMH_sub1"/>
</dbReference>
<dbReference type="InterPro" id="IPR016169">
    <property type="entry name" value="FAD-bd_PCMH_sub2"/>
</dbReference>
<dbReference type="InterPro" id="IPR003170">
    <property type="entry name" value="MurB"/>
</dbReference>
<dbReference type="InterPro" id="IPR011601">
    <property type="entry name" value="MurB_C"/>
</dbReference>
<dbReference type="InterPro" id="IPR036635">
    <property type="entry name" value="MurB_C_sf"/>
</dbReference>
<dbReference type="InterPro" id="IPR006094">
    <property type="entry name" value="Oxid_FAD_bind_N"/>
</dbReference>
<dbReference type="NCBIfam" id="TIGR00179">
    <property type="entry name" value="murB"/>
    <property type="match status" value="1"/>
</dbReference>
<dbReference type="NCBIfam" id="NF000755">
    <property type="entry name" value="PRK00046.1"/>
    <property type="match status" value="1"/>
</dbReference>
<dbReference type="NCBIfam" id="NF010478">
    <property type="entry name" value="PRK13903.1"/>
    <property type="match status" value="1"/>
</dbReference>
<dbReference type="PANTHER" id="PTHR21071">
    <property type="entry name" value="UDP-N-ACETYLENOLPYRUVOYLGLUCOSAMINE REDUCTASE"/>
    <property type="match status" value="1"/>
</dbReference>
<dbReference type="PANTHER" id="PTHR21071:SF4">
    <property type="entry name" value="UDP-N-ACETYLENOLPYRUVOYLGLUCOSAMINE REDUCTASE"/>
    <property type="match status" value="1"/>
</dbReference>
<dbReference type="Pfam" id="PF01565">
    <property type="entry name" value="FAD_binding_4"/>
    <property type="match status" value="1"/>
</dbReference>
<dbReference type="Pfam" id="PF02873">
    <property type="entry name" value="MurB_C"/>
    <property type="match status" value="1"/>
</dbReference>
<dbReference type="SUPFAM" id="SSF56176">
    <property type="entry name" value="FAD-binding/transporter-associated domain-like"/>
    <property type="match status" value="1"/>
</dbReference>
<dbReference type="SUPFAM" id="SSF56194">
    <property type="entry name" value="Uridine diphospho-N-Acetylenolpyruvylglucosamine reductase, MurB, C-terminal domain"/>
    <property type="match status" value="1"/>
</dbReference>
<dbReference type="PROSITE" id="PS51387">
    <property type="entry name" value="FAD_PCMH"/>
    <property type="match status" value="1"/>
</dbReference>
<proteinExistence type="inferred from homology"/>
<protein>
    <recommendedName>
        <fullName evidence="1">UDP-N-acetylenolpyruvoylglucosamine reductase</fullName>
        <ecNumber evidence="1">1.3.1.98</ecNumber>
    </recommendedName>
    <alternativeName>
        <fullName evidence="1">UDP-N-acetylmuramate dehydrogenase</fullName>
    </alternativeName>
</protein>
<feature type="chain" id="PRO_0000179254" description="UDP-N-acetylenolpyruvoylglucosamine reductase">
    <location>
        <begin position="1"/>
        <end position="341"/>
    </location>
</feature>
<feature type="domain" description="FAD-binding PCMH-type" evidence="1">
    <location>
        <begin position="15"/>
        <end position="185"/>
    </location>
</feature>
<feature type="active site" evidence="1">
    <location>
        <position position="161"/>
    </location>
</feature>
<feature type="active site" description="Proton donor" evidence="1">
    <location>
        <position position="231"/>
    </location>
</feature>
<feature type="active site" evidence="1">
    <location>
        <position position="327"/>
    </location>
</feature>
<evidence type="ECO:0000255" key="1">
    <source>
        <dbReference type="HAMAP-Rule" id="MF_00037"/>
    </source>
</evidence>
<accession>Q8EK85</accession>
<gene>
    <name evidence="1" type="primary">murB</name>
    <name type="ordered locus">SO_0213</name>
</gene>
<sequence>MSFPYSLKSFNTFGVTQSCLSLIEVRSKAELQAICLPLYQSKQPMLVLGGGSNIVFTDDFNGTVVRVLSKGISVTEDVSYFYLEIEAGENWHELVEFTLNNHMAGLENLALIPGTVGAAPIQNIGAYGVELCDICHWVEYLDLDSGLLLRLSVDECEFSYRESIFKGRLRDKAVITAVGLRLPKTWQPRLAYGPLQSFAADTVTPRDIFERVCEVRSEKLPDPHILGNAGSFFKNPIISAAAYVELAQRFPNIVGYAQANGDVKLAAGWLIEHAGLKGFVLGNAGVHAKQALVLVNLGNATGQDICRLALHVIARVHDVFGVMLEAEPRIMGLNGETSLHV</sequence>
<organism>
    <name type="scientific">Shewanella oneidensis (strain ATCC 700550 / JCM 31522 / CIP 106686 / LMG 19005 / NCIMB 14063 / MR-1)</name>
    <dbReference type="NCBI Taxonomy" id="211586"/>
    <lineage>
        <taxon>Bacteria</taxon>
        <taxon>Pseudomonadati</taxon>
        <taxon>Pseudomonadota</taxon>
        <taxon>Gammaproteobacteria</taxon>
        <taxon>Alteromonadales</taxon>
        <taxon>Shewanellaceae</taxon>
        <taxon>Shewanella</taxon>
    </lineage>
</organism>
<keyword id="KW-0131">Cell cycle</keyword>
<keyword id="KW-0132">Cell division</keyword>
<keyword id="KW-0133">Cell shape</keyword>
<keyword id="KW-0961">Cell wall biogenesis/degradation</keyword>
<keyword id="KW-0963">Cytoplasm</keyword>
<keyword id="KW-0274">FAD</keyword>
<keyword id="KW-0285">Flavoprotein</keyword>
<keyword id="KW-0521">NADP</keyword>
<keyword id="KW-0560">Oxidoreductase</keyword>
<keyword id="KW-0573">Peptidoglycan synthesis</keyword>
<keyword id="KW-1185">Reference proteome</keyword>
<name>MURB_SHEON</name>
<comment type="function">
    <text evidence="1">Cell wall formation.</text>
</comment>
<comment type="catalytic activity">
    <reaction evidence="1">
        <text>UDP-N-acetyl-alpha-D-muramate + NADP(+) = UDP-N-acetyl-3-O-(1-carboxyvinyl)-alpha-D-glucosamine + NADPH + H(+)</text>
        <dbReference type="Rhea" id="RHEA:12248"/>
        <dbReference type="ChEBI" id="CHEBI:15378"/>
        <dbReference type="ChEBI" id="CHEBI:57783"/>
        <dbReference type="ChEBI" id="CHEBI:58349"/>
        <dbReference type="ChEBI" id="CHEBI:68483"/>
        <dbReference type="ChEBI" id="CHEBI:70757"/>
        <dbReference type="EC" id="1.3.1.98"/>
    </reaction>
</comment>
<comment type="cofactor">
    <cofactor evidence="1">
        <name>FAD</name>
        <dbReference type="ChEBI" id="CHEBI:57692"/>
    </cofactor>
</comment>
<comment type="pathway">
    <text evidence="1">Cell wall biogenesis; peptidoglycan biosynthesis.</text>
</comment>
<comment type="subcellular location">
    <subcellularLocation>
        <location evidence="1">Cytoplasm</location>
    </subcellularLocation>
</comment>
<comment type="similarity">
    <text evidence="1">Belongs to the MurB family.</text>
</comment>